<comment type="function">
    <text evidence="2">Catalyzes alpha-humulene and delta-cadinene, as well as beta-elemene, the thermal rearrangement product of germacrene A and several other bicyclic sesquiterpenes when incubated with (2E,6E)-farnesyl diphosphate.</text>
</comment>
<comment type="cofactor">
    <cofactor evidence="1">
        <name>Mg(2+)</name>
        <dbReference type="ChEBI" id="CHEBI:18420"/>
    </cofactor>
    <cofactor evidence="1">
        <name>Mn(2+)</name>
        <dbReference type="ChEBI" id="CHEBI:29035"/>
    </cofactor>
    <text evidence="1">Binds 3 Mg(2+) or Mn(2+) ions per subunit.</text>
</comment>
<comment type="similarity">
    <text evidence="3">Belongs to the terpene synthase family. Tpsa subfamily.</text>
</comment>
<keyword id="KW-0456">Lyase</keyword>
<keyword id="KW-0460">Magnesium</keyword>
<keyword id="KW-0464">Manganese</keyword>
<keyword id="KW-0479">Metal-binding</keyword>
<reference key="1">
    <citation type="journal article" date="2011" name="J. Biol. Chem.">
        <title>Sandalwood fragrance biosynthesis involves sesquiterpene synthases of both the terpene synthase (TPS)-a and TPS-b Subfamilies, including santalene synthases.</title>
        <authorList>
            <person name="Jones C.G."/>
            <person name="Moniodis J."/>
            <person name="Zulak K.G."/>
            <person name="Scaffidi A."/>
            <person name="Plummer J.A."/>
            <person name="Ghisalberti E.L."/>
            <person name="Barbour E.L."/>
            <person name="Bohlmann J."/>
        </authorList>
    </citation>
    <scope>NUCLEOTIDE SEQUENCE [MRNA]</scope>
    <scope>FUNCTION</scope>
</reference>
<protein>
    <recommendedName>
        <fullName>Sesquiterpene synthase</fullName>
        <shortName>SauSesquiTPS</shortName>
        <ecNumber>4.2.3.-</ecNumber>
    </recommendedName>
</protein>
<name>SAUSS_SANAS</name>
<feature type="chain" id="PRO_0000418947" description="Sesquiterpene synthase">
    <location>
        <begin position="1"/>
        <end position="559"/>
    </location>
</feature>
<feature type="short sequence motif" description="DDXXD motif">
    <location>
        <begin position="312"/>
        <end position="316"/>
    </location>
</feature>
<feature type="binding site" evidence="1">
    <location>
        <position position="312"/>
    </location>
    <ligand>
        <name>Mg(2+)</name>
        <dbReference type="ChEBI" id="CHEBI:18420"/>
        <label>1</label>
    </ligand>
</feature>
<feature type="binding site" evidence="1">
    <location>
        <position position="312"/>
    </location>
    <ligand>
        <name>Mg(2+)</name>
        <dbReference type="ChEBI" id="CHEBI:18420"/>
        <label>2</label>
    </ligand>
</feature>
<feature type="binding site" evidence="1">
    <location>
        <position position="316"/>
    </location>
    <ligand>
        <name>Mg(2+)</name>
        <dbReference type="ChEBI" id="CHEBI:18420"/>
        <label>1</label>
    </ligand>
</feature>
<feature type="binding site" evidence="1">
    <location>
        <position position="316"/>
    </location>
    <ligand>
        <name>Mg(2+)</name>
        <dbReference type="ChEBI" id="CHEBI:18420"/>
        <label>2</label>
    </ligand>
</feature>
<feature type="binding site" evidence="1">
    <location>
        <position position="464"/>
    </location>
    <ligand>
        <name>Mg(2+)</name>
        <dbReference type="ChEBI" id="CHEBI:18420"/>
        <label>3</label>
    </ligand>
</feature>
<accession>E3W207</accession>
<proteinExistence type="evidence at transcript level"/>
<organism>
    <name type="scientific">Santalum austrocaledonicum</name>
    <name type="common">Sandalwood</name>
    <dbReference type="NCBI Taxonomy" id="293154"/>
    <lineage>
        <taxon>Eukaryota</taxon>
        <taxon>Viridiplantae</taxon>
        <taxon>Streptophyta</taxon>
        <taxon>Embryophyta</taxon>
        <taxon>Tracheophyta</taxon>
        <taxon>Spermatophyta</taxon>
        <taxon>Magnoliopsida</taxon>
        <taxon>eudicotyledons</taxon>
        <taxon>Gunneridae</taxon>
        <taxon>Pentapetalae</taxon>
        <taxon>Santalales</taxon>
        <taxon>Santalaceae</taxon>
        <taxon>Santalum</taxon>
    </lineage>
</organism>
<dbReference type="EC" id="4.2.3.-"/>
<dbReference type="EMBL" id="HQ343281">
    <property type="protein sequence ID" value="ADO87005.1"/>
    <property type="molecule type" value="mRNA"/>
</dbReference>
<dbReference type="SMR" id="E3W207"/>
<dbReference type="GO" id="GO:0000287">
    <property type="term" value="F:magnesium ion binding"/>
    <property type="evidence" value="ECO:0007669"/>
    <property type="project" value="InterPro"/>
</dbReference>
<dbReference type="GO" id="GO:0010333">
    <property type="term" value="F:terpene synthase activity"/>
    <property type="evidence" value="ECO:0007669"/>
    <property type="project" value="InterPro"/>
</dbReference>
<dbReference type="GO" id="GO:0016102">
    <property type="term" value="P:diterpenoid biosynthetic process"/>
    <property type="evidence" value="ECO:0007669"/>
    <property type="project" value="InterPro"/>
</dbReference>
<dbReference type="CDD" id="cd00684">
    <property type="entry name" value="Terpene_cyclase_plant_C1"/>
    <property type="match status" value="1"/>
</dbReference>
<dbReference type="FunFam" id="1.10.600.10:FF:000007">
    <property type="entry name" value="Isoprene synthase, chloroplastic"/>
    <property type="match status" value="1"/>
</dbReference>
<dbReference type="FunFam" id="1.50.10.130:FF:000001">
    <property type="entry name" value="Isoprene synthase, chloroplastic"/>
    <property type="match status" value="1"/>
</dbReference>
<dbReference type="Gene3D" id="1.10.600.10">
    <property type="entry name" value="Farnesyl Diphosphate Synthase"/>
    <property type="match status" value="1"/>
</dbReference>
<dbReference type="Gene3D" id="1.50.10.130">
    <property type="entry name" value="Terpene synthase, N-terminal domain"/>
    <property type="match status" value="1"/>
</dbReference>
<dbReference type="InterPro" id="IPR008949">
    <property type="entry name" value="Isoprenoid_synthase_dom_sf"/>
</dbReference>
<dbReference type="InterPro" id="IPR044814">
    <property type="entry name" value="Terpene_cyclase_plant_C1"/>
</dbReference>
<dbReference type="InterPro" id="IPR001906">
    <property type="entry name" value="Terpene_synth_N"/>
</dbReference>
<dbReference type="InterPro" id="IPR036965">
    <property type="entry name" value="Terpene_synth_N_sf"/>
</dbReference>
<dbReference type="InterPro" id="IPR050148">
    <property type="entry name" value="Terpene_synthase-like"/>
</dbReference>
<dbReference type="InterPro" id="IPR005630">
    <property type="entry name" value="Terpene_synthase_metal-bd"/>
</dbReference>
<dbReference type="InterPro" id="IPR008930">
    <property type="entry name" value="Terpenoid_cyclase/PrenylTrfase"/>
</dbReference>
<dbReference type="PANTHER" id="PTHR31225">
    <property type="entry name" value="OS04G0344100 PROTEIN-RELATED"/>
    <property type="match status" value="1"/>
</dbReference>
<dbReference type="PANTHER" id="PTHR31225:SF241">
    <property type="entry name" value="TERPENE SYNTHASE FAMILY, METAL-BINDING DOMAIN PROTEIN"/>
    <property type="match status" value="1"/>
</dbReference>
<dbReference type="Pfam" id="PF01397">
    <property type="entry name" value="Terpene_synth"/>
    <property type="match status" value="1"/>
</dbReference>
<dbReference type="Pfam" id="PF03936">
    <property type="entry name" value="Terpene_synth_C"/>
    <property type="match status" value="1"/>
</dbReference>
<dbReference type="SFLD" id="SFLDS00005">
    <property type="entry name" value="Isoprenoid_Synthase_Type_I"/>
    <property type="match status" value="1"/>
</dbReference>
<dbReference type="SFLD" id="SFLDG01604">
    <property type="entry name" value="Terpene_Cyclase_Like_1_C_Termi"/>
    <property type="match status" value="1"/>
</dbReference>
<dbReference type="SUPFAM" id="SSF48239">
    <property type="entry name" value="Terpenoid cyclases/Protein prenyltransferases"/>
    <property type="match status" value="1"/>
</dbReference>
<dbReference type="SUPFAM" id="SSF48576">
    <property type="entry name" value="Terpenoid synthases"/>
    <property type="match status" value="1"/>
</dbReference>
<sequence>MENQKVPISSVPNLKELSRPIANFPPSIWGDRFINYTCEDENEQAQKERQVEELKEQVRRELAATVDKPLQQLNIIDATQRLGIAYHFENEIEESLEHIYLHTYVKNNCFQGSHDLYSVALWFRLLRQDGYKVSCDVFDNFRDYEGNFKNSLMEDAKGLLELYEATHLSVHGEEMLDDALEFAKTRLESIVNHLNYPLAEQVRHALYRPLRKGLPRLEAVYFFRIYEAYHSHNKALLKLAKLDFNLLQSLHRKELGDMARWWRSLDFATKFPFARDRLVEGYFWILGVYFEPQYSLAREITTKVFAMISTIDDIYDAYGTLDELKLFTEAIQRWDVGSLDQLPEYMKPCYKSILDVYNEIEEEMANQGSLFRMHYAKEVMKTIVEGYMDEAKWCHEKYVPTFQEYMSLALVTSGYTFLTTISYLGMGGIASKEAFEWLFSHPPIIEASESICRLMDDMSSHKFEQERGHVASGIECYMKQYGVIEEEAHDEFHKRLVKAWKDINEGFLRPYAVPEPLLMRILNLTRVMDVIYKNEDSYTHVKKAMKDNIASLLIDPMIV</sequence>
<evidence type="ECO:0000250" key="1"/>
<evidence type="ECO:0000269" key="2">
    <source>
    </source>
</evidence>
<evidence type="ECO:0000305" key="3"/>